<proteinExistence type="evidence at transcript level"/>
<sequence>MSYKGNDIEKQQSASTATGFNDKQIASTSEDATDRSHNIHGDTSSLDSRYTYETVDQEKNYFKRVYNSFKPMNLEEQGIDTSQLTPVERTIIASAKHPLARRLKARHLQMIAIGGSIGTGLFVGSGYALANGGPGAVLIGYVIVGYALLTVVNALGELSVQFPVSGSFNAFFSRFLEPSFGGTFGILYAASWCISLPSELIAAAMTIQYWNTEVNPAVWVAVFWVVIVVINLFGVKGYGEMEYFLSIIKVLAVVGFIILGICITCGVGDQGYIGGKYWHNPGAFNHGLKGVTSVFISAAFSFGGIELVALAASETANPRISLPAAVKSTFWRIFIFYILTAIIIGCLVPYTNDDLLNGTGIAASPFVIAVSQGGIRVVPHIMNAVVVIAVISVGNSSVYGCSRTLASLAVQGLLPKSMGYIDRGGRPLIAILFTSAIGLLGFLVVVDNEGDVFTWFFSICSLSSFFTWGAINVVHLRWRFALAAQGRSTDEIIFRSPLGTFGSWTGILVLILIVIGEVWVSIWPIGSPADVQQFWKNCLSLPLMIVMWAGFKTYHRSWNMLWVKLEDIDLDTGRREIDVELLKQELAEERQIIKSKPFVYRIYKFFF</sequence>
<accession>Q59WB3</accession>
<dbReference type="EMBL" id="CP017623">
    <property type="protein sequence ID" value="AOW26364.1"/>
    <property type="molecule type" value="Genomic_DNA"/>
</dbReference>
<dbReference type="RefSeq" id="XP_713900.1">
    <property type="nucleotide sequence ID" value="XM_708807.2"/>
</dbReference>
<dbReference type="SMR" id="Q59WB3"/>
<dbReference type="STRING" id="237561.Q59WB3"/>
<dbReference type="TCDB" id="2.A.3.10.25">
    <property type="family name" value="the amino acid-polyamine-organocation (apc) family"/>
</dbReference>
<dbReference type="GlyCosmos" id="Q59WB3">
    <property type="glycosylation" value="2 sites, No reported glycans"/>
</dbReference>
<dbReference type="EnsemblFungi" id="C1_07120W_A-T">
    <property type="protein sequence ID" value="C1_07120W_A-T-p1"/>
    <property type="gene ID" value="C1_07120W_A"/>
</dbReference>
<dbReference type="GeneID" id="3644463"/>
<dbReference type="KEGG" id="cal:CAALFM_C107120WA"/>
<dbReference type="CGD" id="CAL0000198089">
    <property type="gene designation" value="GAP4"/>
</dbReference>
<dbReference type="VEuPathDB" id="FungiDB:C1_07120W_A"/>
<dbReference type="eggNOG" id="KOG1286">
    <property type="taxonomic scope" value="Eukaryota"/>
</dbReference>
<dbReference type="HOGENOM" id="CLU_007946_12_0_1"/>
<dbReference type="InParanoid" id="Q59WB3"/>
<dbReference type="OMA" id="CLSIPIM"/>
<dbReference type="OrthoDB" id="3900342at2759"/>
<dbReference type="Proteomes" id="UP000000559">
    <property type="component" value="Chromosome 1"/>
</dbReference>
<dbReference type="GO" id="GO:1903561">
    <property type="term" value="C:extracellular vesicle"/>
    <property type="evidence" value="ECO:0000314"/>
    <property type="project" value="CGD"/>
</dbReference>
<dbReference type="GO" id="GO:0016020">
    <property type="term" value="C:membrane"/>
    <property type="evidence" value="ECO:0000318"/>
    <property type="project" value="GO_Central"/>
</dbReference>
<dbReference type="GO" id="GO:0005886">
    <property type="term" value="C:plasma membrane"/>
    <property type="evidence" value="ECO:0000314"/>
    <property type="project" value="CGD"/>
</dbReference>
<dbReference type="GO" id="GO:0015171">
    <property type="term" value="F:amino acid transmembrane transporter activity"/>
    <property type="evidence" value="ECO:0000314"/>
    <property type="project" value="CGD"/>
</dbReference>
<dbReference type="GO" id="GO:0003333">
    <property type="term" value="P:amino acid transmembrane transport"/>
    <property type="evidence" value="ECO:0000315"/>
    <property type="project" value="CGD"/>
</dbReference>
<dbReference type="GO" id="GO:0015805">
    <property type="term" value="P:S-adenosyl-L-methionine transport"/>
    <property type="evidence" value="ECO:0000315"/>
    <property type="project" value="CGD"/>
</dbReference>
<dbReference type="FunFam" id="1.20.1740.10:FF:000017">
    <property type="entry name" value="Amino acid permease"/>
    <property type="match status" value="1"/>
</dbReference>
<dbReference type="Gene3D" id="1.20.1740.10">
    <property type="entry name" value="Amino acid/polyamine transporter I"/>
    <property type="match status" value="1"/>
</dbReference>
<dbReference type="InterPro" id="IPR004841">
    <property type="entry name" value="AA-permease/SLC12A_dom"/>
</dbReference>
<dbReference type="InterPro" id="IPR004840">
    <property type="entry name" value="Amino_acid_permease_CS"/>
</dbReference>
<dbReference type="InterPro" id="IPR004762">
    <property type="entry name" value="Amino_acid_permease_fungi"/>
</dbReference>
<dbReference type="InterPro" id="IPR050524">
    <property type="entry name" value="APC_YAT"/>
</dbReference>
<dbReference type="NCBIfam" id="TIGR00913">
    <property type="entry name" value="2A0310"/>
    <property type="match status" value="1"/>
</dbReference>
<dbReference type="PANTHER" id="PTHR43341">
    <property type="entry name" value="AMINO ACID PERMEASE"/>
    <property type="match status" value="1"/>
</dbReference>
<dbReference type="PANTHER" id="PTHR43341:SF10">
    <property type="entry name" value="S-ADENOSYLMETHIONINE PERMEASE SAM3-RELATED"/>
    <property type="match status" value="1"/>
</dbReference>
<dbReference type="Pfam" id="PF00324">
    <property type="entry name" value="AA_permease"/>
    <property type="match status" value="1"/>
</dbReference>
<dbReference type="PROSITE" id="PS00218">
    <property type="entry name" value="AMINO_ACID_PERMEASE_1"/>
    <property type="match status" value="1"/>
</dbReference>
<evidence type="ECO:0000255" key="1"/>
<evidence type="ECO:0000255" key="2">
    <source>
        <dbReference type="PROSITE-ProRule" id="PRU00498"/>
    </source>
</evidence>
<evidence type="ECO:0000256" key="3">
    <source>
        <dbReference type="SAM" id="MobiDB-lite"/>
    </source>
</evidence>
<evidence type="ECO:0000269" key="4">
    <source>
    </source>
</evidence>
<evidence type="ECO:0000269" key="5">
    <source>
    </source>
</evidence>
<evidence type="ECO:0000269" key="6">
    <source>
    </source>
</evidence>
<evidence type="ECO:0000269" key="7">
    <source>
    </source>
</evidence>
<evidence type="ECO:0000269" key="8">
    <source>
    </source>
</evidence>
<evidence type="ECO:0000269" key="9">
    <source>
    </source>
</evidence>
<evidence type="ECO:0000303" key="10">
    <source>
    </source>
</evidence>
<evidence type="ECO:0000305" key="11"/>
<protein>
    <recommendedName>
        <fullName evidence="10">S-adenosylmethionine permease GAP4</fullName>
        <shortName evidence="10">SAM permease</shortName>
    </recommendedName>
    <alternativeName>
        <fullName evidence="11">Amino-acid permease GAP4</fullName>
    </alternativeName>
</protein>
<organism>
    <name type="scientific">Candida albicans (strain SC5314 / ATCC MYA-2876)</name>
    <name type="common">Yeast</name>
    <dbReference type="NCBI Taxonomy" id="237561"/>
    <lineage>
        <taxon>Eukaryota</taxon>
        <taxon>Fungi</taxon>
        <taxon>Dikarya</taxon>
        <taxon>Ascomycota</taxon>
        <taxon>Saccharomycotina</taxon>
        <taxon>Pichiomycetes</taxon>
        <taxon>Debaryomycetaceae</taxon>
        <taxon>Candida/Lodderomyces clade</taxon>
        <taxon>Candida</taxon>
    </lineage>
</organism>
<comment type="function">
    <text evidence="9">Amino-acid permease involved in S-adenosylmethionine (SAM) transport and required for SAM-induced morphogenesis (PubMed:28028545). GAP4 is also able to transport arginine and thialysine, and thus probably also lysine (PubMed:21764911).</text>
</comment>
<comment type="subcellular location">
    <subcellularLocation>
        <location evidence="7 9">Cell membrane</location>
        <topology evidence="1">Multi-pass membrane protein</topology>
    </subcellularLocation>
</comment>
<comment type="induction">
    <text evidence="4 5 6 8 9">Expression is under control of the CSY1 amino-acid sensor (PubMed:28028545). Expression is also regulated by HAP43, GCN2, GCN4 and SSN6 (PubMed:15814841, PubMed:16215176, PubMed:21592964). Induced during biofilm development (PubMed:22265407).</text>
</comment>
<comment type="similarity">
    <text evidence="11">Belongs to the amino acid-polyamine-organocation (APC) superfamily. YAT (TC 2.A.3.10) family.</text>
</comment>
<feature type="chain" id="PRO_0000439809" description="S-adenosylmethionine permease GAP4">
    <location>
        <begin position="1"/>
        <end position="607"/>
    </location>
</feature>
<feature type="transmembrane region" description="Helical" evidence="1">
    <location>
        <begin position="110"/>
        <end position="130"/>
    </location>
</feature>
<feature type="transmembrane region" description="Helical" evidence="1">
    <location>
        <begin position="132"/>
        <end position="152"/>
    </location>
</feature>
<feature type="transmembrane region" description="Helical" evidence="1">
    <location>
        <begin position="184"/>
        <end position="204"/>
    </location>
</feature>
<feature type="transmembrane region" description="Helical" evidence="1">
    <location>
        <begin position="214"/>
        <end position="234"/>
    </location>
</feature>
<feature type="transmembrane region" description="Helical" evidence="1">
    <location>
        <begin position="243"/>
        <end position="263"/>
    </location>
</feature>
<feature type="transmembrane region" description="Helical" evidence="1">
    <location>
        <begin position="291"/>
        <end position="311"/>
    </location>
</feature>
<feature type="transmembrane region" description="Helical" evidence="1">
    <location>
        <begin position="330"/>
        <end position="350"/>
    </location>
</feature>
<feature type="transmembrane region" description="Helical" evidence="1">
    <location>
        <begin position="373"/>
        <end position="393"/>
    </location>
</feature>
<feature type="transmembrane region" description="Helical" evidence="1">
    <location>
        <begin position="427"/>
        <end position="447"/>
    </location>
</feature>
<feature type="transmembrane region" description="Helical" evidence="1">
    <location>
        <begin position="452"/>
        <end position="472"/>
    </location>
</feature>
<feature type="transmembrane region" description="Helical" evidence="1">
    <location>
        <begin position="506"/>
        <end position="526"/>
    </location>
</feature>
<feature type="transmembrane region" description="Helical" evidence="1">
    <location>
        <begin position="531"/>
        <end position="551"/>
    </location>
</feature>
<feature type="region of interest" description="Disordered" evidence="3">
    <location>
        <begin position="1"/>
        <end position="45"/>
    </location>
</feature>
<feature type="compositionally biased region" description="Basic and acidic residues" evidence="3">
    <location>
        <begin position="1"/>
        <end position="10"/>
    </location>
</feature>
<feature type="compositionally biased region" description="Polar residues" evidence="3">
    <location>
        <begin position="11"/>
        <end position="30"/>
    </location>
</feature>
<feature type="glycosylation site" description="N-linked (GlcNAc...) asparagine" evidence="2">
    <location>
        <position position="357"/>
    </location>
</feature>
<feature type="glycosylation site" description="N-linked (GlcNAc...) asparagine" evidence="2">
    <location>
        <position position="395"/>
    </location>
</feature>
<name>GAP4_CANAL</name>
<reference key="1">
    <citation type="journal article" date="2004" name="Proc. Natl. Acad. Sci. U.S.A.">
        <title>The diploid genome sequence of Candida albicans.</title>
        <authorList>
            <person name="Jones T."/>
            <person name="Federspiel N.A."/>
            <person name="Chibana H."/>
            <person name="Dungan J."/>
            <person name="Kalman S."/>
            <person name="Magee B.B."/>
            <person name="Newport G."/>
            <person name="Thorstenson Y.R."/>
            <person name="Agabian N."/>
            <person name="Magee P.T."/>
            <person name="Davis R.W."/>
            <person name="Scherer S."/>
        </authorList>
    </citation>
    <scope>NUCLEOTIDE SEQUENCE [LARGE SCALE GENOMIC DNA]</scope>
    <source>
        <strain>SC5314 / ATCC MYA-2876</strain>
    </source>
</reference>
<reference key="2">
    <citation type="journal article" date="2007" name="Genome Biol.">
        <title>Assembly of the Candida albicans genome into sixteen supercontigs aligned on the eight chromosomes.</title>
        <authorList>
            <person name="van het Hoog M."/>
            <person name="Rast T.J."/>
            <person name="Martchenko M."/>
            <person name="Grindle S."/>
            <person name="Dignard D."/>
            <person name="Hogues H."/>
            <person name="Cuomo C."/>
            <person name="Berriman M."/>
            <person name="Scherer S."/>
            <person name="Magee B.B."/>
            <person name="Whiteway M."/>
            <person name="Chibana H."/>
            <person name="Nantel A."/>
            <person name="Magee P.T."/>
        </authorList>
    </citation>
    <scope>GENOME REANNOTATION</scope>
    <source>
        <strain>SC5314 / ATCC MYA-2876</strain>
    </source>
</reference>
<reference key="3">
    <citation type="journal article" date="2013" name="Genome Biol.">
        <title>Assembly of a phased diploid Candida albicans genome facilitates allele-specific measurements and provides a simple model for repeat and indel structure.</title>
        <authorList>
            <person name="Muzzey D."/>
            <person name="Schwartz K."/>
            <person name="Weissman J.S."/>
            <person name="Sherlock G."/>
        </authorList>
    </citation>
    <scope>NUCLEOTIDE SEQUENCE [LARGE SCALE GENOMIC DNA]</scope>
    <scope>GENOME REANNOTATION</scope>
    <source>
        <strain>SC5314 / ATCC MYA-2876</strain>
    </source>
</reference>
<reference key="4">
    <citation type="journal article" date="2005" name="Eukaryot. Cell">
        <title>Global role of the protein kinase Gcn2 in the human pathogen Candida albicans.</title>
        <authorList>
            <person name="Tournu H."/>
            <person name="Tripathi G."/>
            <person name="Bertram G."/>
            <person name="Macaskill S."/>
            <person name="Mavor A."/>
            <person name="Walker L."/>
            <person name="Odds F.C."/>
            <person name="Gow N.A."/>
            <person name="Brown A.J."/>
        </authorList>
    </citation>
    <scope>INDUCTION</scope>
</reference>
<reference key="5">
    <citation type="journal article" date="2005" name="Mol. Biol. Cell">
        <title>Global roles of Ssn6 in Tup1- and Nrg1-dependent gene regulation in the fungal pathogen, Candida albicans.</title>
        <authorList>
            <person name="Garcia-Sanchez S."/>
            <person name="Mavor A.L."/>
            <person name="Russell C.L."/>
            <person name="Argimon S."/>
            <person name="Dennison P."/>
            <person name="Enjalbert B."/>
            <person name="Brown A.J."/>
        </authorList>
    </citation>
    <scope>INDUCTION</scope>
</reference>
<reference key="6">
    <citation type="journal article" date="2011" name="Eukaryot. Cell">
        <title>The Candida albicans GAP gene family encodes permeases involved in general and specific amino acid uptake and sensing.</title>
        <authorList>
            <person name="Kraidlova L."/>
            <person name="Van Zeebroeck G."/>
            <person name="Van Dijck P."/>
            <person name="Sychrova H."/>
        </authorList>
    </citation>
    <scope>FUNCTION</scope>
    <scope>SUBCELLULAR LOCATION</scope>
</reference>
<reference key="7">
    <citation type="journal article" date="2011" name="J. Biol. Chem.">
        <title>Cap2-HAP complex is a critical transcriptional regulator that has dual but contrasting roles in regulation of iron homeostasis in Candida albicans.</title>
        <authorList>
            <person name="Singh R.P."/>
            <person name="Prasad H.K."/>
            <person name="Sinha I."/>
            <person name="Agarwal N."/>
            <person name="Natarajan K."/>
        </authorList>
    </citation>
    <scope>INDUCTION</scope>
</reference>
<reference key="8">
    <citation type="journal article" date="2012" name="Cell">
        <title>A recently evolved transcriptional network controls biofilm development in Candida albicans.</title>
        <authorList>
            <person name="Nobile C.J."/>
            <person name="Fox E.P."/>
            <person name="Nett J.E."/>
            <person name="Sorrells T.R."/>
            <person name="Mitrovich Q.M."/>
            <person name="Hernday A.D."/>
            <person name="Tuch B.B."/>
            <person name="Andes D.R."/>
            <person name="Johnson A.D."/>
        </authorList>
    </citation>
    <scope>INDUCTION</scope>
</reference>
<reference key="9">
    <citation type="journal article" date="2016" name="MSphere">
        <title>Characterization of the Candida albicans amino acid permease family: Gap2 is the only general amino acid permease and Gap4 is an S-adenosylmethionine (SAM) transporter required for SAM-induced morphogenesis.</title>
        <authorList>
            <person name="Kraidlova L."/>
            <person name="Schrevens S."/>
            <person name="Tournu H."/>
            <person name="Van Zeebroeck G."/>
            <person name="Sychrova H."/>
            <person name="Van Dijck P."/>
        </authorList>
    </citation>
    <scope>FUNCTION</scope>
    <scope>INDUCTION</scope>
    <scope>SUBCELLULAR LOCATION</scope>
</reference>
<gene>
    <name evidence="10" type="primary">GAP4</name>
    <name type="ordered locus">CAALFM_C107120WA</name>
</gene>
<keyword id="KW-0029">Amino-acid transport</keyword>
<keyword id="KW-1003">Cell membrane</keyword>
<keyword id="KW-0325">Glycoprotein</keyword>
<keyword id="KW-0472">Membrane</keyword>
<keyword id="KW-1185">Reference proteome</keyword>
<keyword id="KW-0812">Transmembrane</keyword>
<keyword id="KW-1133">Transmembrane helix</keyword>
<keyword id="KW-0813">Transport</keyword>